<feature type="chain" id="PRO_1000056552" description="Trans-aconitate 2-methyltransferase">
    <location>
        <begin position="1"/>
        <end position="260"/>
    </location>
</feature>
<gene>
    <name evidence="1" type="primary">tam</name>
    <name type="ordered locus">Aave_2207</name>
</gene>
<organism>
    <name type="scientific">Paracidovorax citrulli (strain AAC00-1)</name>
    <name type="common">Acidovorax citrulli</name>
    <dbReference type="NCBI Taxonomy" id="397945"/>
    <lineage>
        <taxon>Bacteria</taxon>
        <taxon>Pseudomonadati</taxon>
        <taxon>Pseudomonadota</taxon>
        <taxon>Betaproteobacteria</taxon>
        <taxon>Burkholderiales</taxon>
        <taxon>Comamonadaceae</taxon>
        <taxon>Paracidovorax</taxon>
    </lineage>
</organism>
<sequence>MHDWNPALYRRFEDERTRPAHELLARVPLSAASHVVDLGCGPGNSTELLAVRFPGARVTGIDTSAAMLQSARERLPAAEFVQADIAAWAPQPGEAPDLLYANASLQWVGGHESLIPRLFAALAPGGVLAIQMPDNRQEPSHRTMREVAAQAPWRDAIGDAAAVRTRILGIADYYDLLAPIARSVDVWHTVYQHPMASAAAIVEWVSGTGLKPFVDPLPEAQRAGFLAAYERGIDAAYPVRADGQRLLAFPRMFIVARRSA</sequence>
<name>TAM_PARC0</name>
<comment type="function">
    <text evidence="1">Catalyzes the S-adenosylmethionine monomethyl esterification of trans-aconitate.</text>
</comment>
<comment type="catalytic activity">
    <reaction evidence="1">
        <text>trans-aconitate + S-adenosyl-L-methionine = (E)-3-(methoxycarbonyl)pent-2-enedioate + S-adenosyl-L-homocysteine</text>
        <dbReference type="Rhea" id="RHEA:14969"/>
        <dbReference type="ChEBI" id="CHEBI:15708"/>
        <dbReference type="ChEBI" id="CHEBI:57470"/>
        <dbReference type="ChEBI" id="CHEBI:57856"/>
        <dbReference type="ChEBI" id="CHEBI:59789"/>
        <dbReference type="EC" id="2.1.1.144"/>
    </reaction>
</comment>
<comment type="subcellular location">
    <subcellularLocation>
        <location evidence="1">Cytoplasm</location>
    </subcellularLocation>
</comment>
<comment type="similarity">
    <text evidence="1">Belongs to the methyltransferase superfamily. Tam family.</text>
</comment>
<proteinExistence type="inferred from homology"/>
<dbReference type="EC" id="2.1.1.144" evidence="1"/>
<dbReference type="EMBL" id="CP000512">
    <property type="protein sequence ID" value="ABM32785.1"/>
    <property type="molecule type" value="Genomic_DNA"/>
</dbReference>
<dbReference type="RefSeq" id="WP_011795321.1">
    <property type="nucleotide sequence ID" value="NC_008752.1"/>
</dbReference>
<dbReference type="SMR" id="A1TP97"/>
<dbReference type="STRING" id="397945.Aave_2207"/>
<dbReference type="GeneID" id="79792484"/>
<dbReference type="KEGG" id="aav:Aave_2207"/>
<dbReference type="eggNOG" id="COG4106">
    <property type="taxonomic scope" value="Bacteria"/>
</dbReference>
<dbReference type="HOGENOM" id="CLU_037990_5_2_4"/>
<dbReference type="OrthoDB" id="9795085at2"/>
<dbReference type="Proteomes" id="UP000002596">
    <property type="component" value="Chromosome"/>
</dbReference>
<dbReference type="GO" id="GO:0005737">
    <property type="term" value="C:cytoplasm"/>
    <property type="evidence" value="ECO:0007669"/>
    <property type="project" value="UniProtKB-SubCell"/>
</dbReference>
<dbReference type="GO" id="GO:0030798">
    <property type="term" value="F:trans-aconitate 2-methyltransferase activity"/>
    <property type="evidence" value="ECO:0007669"/>
    <property type="project" value="UniProtKB-UniRule"/>
</dbReference>
<dbReference type="GO" id="GO:0032259">
    <property type="term" value="P:methylation"/>
    <property type="evidence" value="ECO:0007669"/>
    <property type="project" value="UniProtKB-KW"/>
</dbReference>
<dbReference type="CDD" id="cd02440">
    <property type="entry name" value="AdoMet_MTases"/>
    <property type="match status" value="1"/>
</dbReference>
<dbReference type="Gene3D" id="1.10.150.290">
    <property type="entry name" value="S-adenosyl-L-methionine-dependent methyltransferases"/>
    <property type="match status" value="1"/>
</dbReference>
<dbReference type="Gene3D" id="3.40.50.150">
    <property type="entry name" value="Vaccinia Virus protein VP39"/>
    <property type="match status" value="1"/>
</dbReference>
<dbReference type="HAMAP" id="MF_00560">
    <property type="entry name" value="Tran_acon_Me_trans"/>
    <property type="match status" value="1"/>
</dbReference>
<dbReference type="InterPro" id="IPR041698">
    <property type="entry name" value="Methyltransf_25"/>
</dbReference>
<dbReference type="InterPro" id="IPR029063">
    <property type="entry name" value="SAM-dependent_MTases_sf"/>
</dbReference>
<dbReference type="InterPro" id="IPR023506">
    <property type="entry name" value="Trans-aconitate_MeTrfase"/>
</dbReference>
<dbReference type="InterPro" id="IPR023149">
    <property type="entry name" value="Trans_acon_MeTrfase_C"/>
</dbReference>
<dbReference type="NCBIfam" id="NF002463">
    <property type="entry name" value="PRK01683.1"/>
    <property type="match status" value="1"/>
</dbReference>
<dbReference type="PANTHER" id="PTHR43861:SF1">
    <property type="entry name" value="TRANS-ACONITATE 2-METHYLTRANSFERASE"/>
    <property type="match status" value="1"/>
</dbReference>
<dbReference type="PANTHER" id="PTHR43861">
    <property type="entry name" value="TRANS-ACONITATE 2-METHYLTRANSFERASE-RELATED"/>
    <property type="match status" value="1"/>
</dbReference>
<dbReference type="Pfam" id="PF13649">
    <property type="entry name" value="Methyltransf_25"/>
    <property type="match status" value="1"/>
</dbReference>
<dbReference type="SUPFAM" id="SSF53335">
    <property type="entry name" value="S-adenosyl-L-methionine-dependent methyltransferases"/>
    <property type="match status" value="1"/>
</dbReference>
<keyword id="KW-0963">Cytoplasm</keyword>
<keyword id="KW-0489">Methyltransferase</keyword>
<keyword id="KW-0949">S-adenosyl-L-methionine</keyword>
<keyword id="KW-0808">Transferase</keyword>
<reference key="1">
    <citation type="submission" date="2006-12" db="EMBL/GenBank/DDBJ databases">
        <title>Complete sequence of Acidovorax avenae subsp. citrulli AAC00-1.</title>
        <authorList>
            <person name="Copeland A."/>
            <person name="Lucas S."/>
            <person name="Lapidus A."/>
            <person name="Barry K."/>
            <person name="Detter J.C."/>
            <person name="Glavina del Rio T."/>
            <person name="Dalin E."/>
            <person name="Tice H."/>
            <person name="Pitluck S."/>
            <person name="Kiss H."/>
            <person name="Brettin T."/>
            <person name="Bruce D."/>
            <person name="Han C."/>
            <person name="Tapia R."/>
            <person name="Gilna P."/>
            <person name="Schmutz J."/>
            <person name="Larimer F."/>
            <person name="Land M."/>
            <person name="Hauser L."/>
            <person name="Kyrpides N."/>
            <person name="Kim E."/>
            <person name="Stahl D."/>
            <person name="Richardson P."/>
        </authorList>
    </citation>
    <scope>NUCLEOTIDE SEQUENCE [LARGE SCALE GENOMIC DNA]</scope>
    <source>
        <strain>AAC00-1</strain>
    </source>
</reference>
<protein>
    <recommendedName>
        <fullName evidence="1">Trans-aconitate 2-methyltransferase</fullName>
        <ecNumber evidence="1">2.1.1.144</ecNumber>
    </recommendedName>
</protein>
<evidence type="ECO:0000255" key="1">
    <source>
        <dbReference type="HAMAP-Rule" id="MF_00560"/>
    </source>
</evidence>
<accession>A1TP97</accession>